<comment type="function">
    <text evidence="1">Required for accurate and efficient protein synthesis under certain stress conditions. May act as a fidelity factor of the translation reaction, by catalyzing a one-codon backward translocation of tRNAs on improperly translocated ribosomes. Back-translocation proceeds from a post-translocation (POST) complex to a pre-translocation (PRE) complex, thus giving elongation factor G a second chance to translocate the tRNAs correctly. Binds to ribosomes in a GTP-dependent manner.</text>
</comment>
<comment type="catalytic activity">
    <reaction evidence="1">
        <text>GTP + H2O = GDP + phosphate + H(+)</text>
        <dbReference type="Rhea" id="RHEA:19669"/>
        <dbReference type="ChEBI" id="CHEBI:15377"/>
        <dbReference type="ChEBI" id="CHEBI:15378"/>
        <dbReference type="ChEBI" id="CHEBI:37565"/>
        <dbReference type="ChEBI" id="CHEBI:43474"/>
        <dbReference type="ChEBI" id="CHEBI:58189"/>
        <dbReference type="EC" id="3.6.5.n1"/>
    </reaction>
</comment>
<comment type="subcellular location">
    <subcellularLocation>
        <location evidence="1">Cell inner membrane</location>
        <topology evidence="1">Peripheral membrane protein</topology>
        <orientation evidence="1">Cytoplasmic side</orientation>
    </subcellularLocation>
</comment>
<comment type="similarity">
    <text evidence="1">Belongs to the TRAFAC class translation factor GTPase superfamily. Classic translation factor GTPase family. LepA subfamily.</text>
</comment>
<comment type="sequence caution" evidence="2">
    <conflict type="erroneous initiation">
        <sequence resource="EMBL-CDS" id="BAD79230"/>
    </conflict>
</comment>
<gene>
    <name evidence="1" type="primary">lepA</name>
    <name type="ordered locus">syc1040_d</name>
</gene>
<organism>
    <name type="scientific">Synechococcus sp. (strain ATCC 27144 / PCC 6301 / SAUG 1402/1)</name>
    <name type="common">Anacystis nidulans</name>
    <dbReference type="NCBI Taxonomy" id="269084"/>
    <lineage>
        <taxon>Bacteria</taxon>
        <taxon>Bacillati</taxon>
        <taxon>Cyanobacteriota</taxon>
        <taxon>Cyanophyceae</taxon>
        <taxon>Synechococcales</taxon>
        <taxon>Synechococcaceae</taxon>
        <taxon>Synechococcus</taxon>
    </lineage>
</organism>
<sequence>MTDVSVSKIRNFCIIAHIDHGKSTLADRLLQETGTVQAREMKEQFLDNMELERERGITIKLQAARMNYRAQDGEQYVLNLIDTPGHVDFSYEVSRSLQACEGALLVVDASQGVEAQTLANVYLALENDLEIIPVPNKIDLPGADPERVKREIEEVIGLDCSGAIEASAKSGIGIGEILESIVHLVPPPSDTTGEPLRALIFDSYYDPYRGVIVYFRVIDGTVRKGDRIRLMASGKEYEIDELGVLSPNQVQVEELHAGEVGYIAASIKAVADARVGDTITLARARATEPLPGYVEAKPMVFCGLFPTDSDRYPDLRDALEKLQLSDAALQYEPETSSAMGFGFRCGFLGLLHMEIVQERLEREYNLDLITTAPSVVYQVTTLDGEVLRLDNPSKLPPPQQREKIEEPYVKVEIITPENYVGALMDLCQTRRGIFIDMKYLTQERTTLIYEMPLAEVVTDFFDQMKSRTKGYASMEYSLIGYREGELVRMDILINSEPVDPLATIVHRDKAYYVGKALVEKLKELIPRHQFKIPLQAAIGSRVIASESIPALRKDVLAKCYGGDISRKKKLLQKQAKGKKRMKAIGTVDVPQEAFMAVLKLDREG</sequence>
<keyword id="KW-0997">Cell inner membrane</keyword>
<keyword id="KW-1003">Cell membrane</keyword>
<keyword id="KW-0342">GTP-binding</keyword>
<keyword id="KW-0378">Hydrolase</keyword>
<keyword id="KW-0472">Membrane</keyword>
<keyword id="KW-0547">Nucleotide-binding</keyword>
<keyword id="KW-0648">Protein biosynthesis</keyword>
<protein>
    <recommendedName>
        <fullName evidence="1">Elongation factor 4</fullName>
        <shortName evidence="1">EF-4</shortName>
        <ecNumber evidence="1">3.6.5.n1</ecNumber>
    </recommendedName>
    <alternativeName>
        <fullName evidence="1">Ribosomal back-translocase LepA</fullName>
    </alternativeName>
</protein>
<evidence type="ECO:0000255" key="1">
    <source>
        <dbReference type="HAMAP-Rule" id="MF_00071"/>
    </source>
</evidence>
<evidence type="ECO:0000305" key="2"/>
<reference key="1">
    <citation type="journal article" date="2007" name="Photosyn. Res.">
        <title>Complete nucleotide sequence of the freshwater unicellular cyanobacterium Synechococcus elongatus PCC 6301 chromosome: gene content and organization.</title>
        <authorList>
            <person name="Sugita C."/>
            <person name="Ogata K."/>
            <person name="Shikata M."/>
            <person name="Jikuya H."/>
            <person name="Takano J."/>
            <person name="Furumichi M."/>
            <person name="Kanehisa M."/>
            <person name="Omata T."/>
            <person name="Sugiura M."/>
            <person name="Sugita M."/>
        </authorList>
    </citation>
    <scope>NUCLEOTIDE SEQUENCE [LARGE SCALE GENOMIC DNA]</scope>
    <source>
        <strain>ATCC 27144 / PCC 6301 / SAUG 1402/1</strain>
    </source>
</reference>
<feature type="chain" id="PRO_0000224804" description="Elongation factor 4">
    <location>
        <begin position="1"/>
        <end position="604"/>
    </location>
</feature>
<feature type="domain" description="tr-type G">
    <location>
        <begin position="7"/>
        <end position="189"/>
    </location>
</feature>
<feature type="binding site" evidence="1">
    <location>
        <begin position="19"/>
        <end position="24"/>
    </location>
    <ligand>
        <name>GTP</name>
        <dbReference type="ChEBI" id="CHEBI:37565"/>
    </ligand>
</feature>
<feature type="binding site" evidence="1">
    <location>
        <begin position="136"/>
        <end position="139"/>
    </location>
    <ligand>
        <name>GTP</name>
        <dbReference type="ChEBI" id="CHEBI:37565"/>
    </ligand>
</feature>
<accession>Q5N390</accession>
<proteinExistence type="inferred from homology"/>
<name>LEPA_SYNP6</name>
<dbReference type="EC" id="3.6.5.n1" evidence="1"/>
<dbReference type="EMBL" id="AP008231">
    <property type="protein sequence ID" value="BAD79230.1"/>
    <property type="status" value="ALT_INIT"/>
    <property type="molecule type" value="Genomic_DNA"/>
</dbReference>
<dbReference type="RefSeq" id="WP_041676973.1">
    <property type="nucleotide sequence ID" value="NC_006576.1"/>
</dbReference>
<dbReference type="SMR" id="Q5N390"/>
<dbReference type="KEGG" id="syc:syc1040_d"/>
<dbReference type="eggNOG" id="COG0481">
    <property type="taxonomic scope" value="Bacteria"/>
</dbReference>
<dbReference type="Proteomes" id="UP000001175">
    <property type="component" value="Chromosome"/>
</dbReference>
<dbReference type="GO" id="GO:0005886">
    <property type="term" value="C:plasma membrane"/>
    <property type="evidence" value="ECO:0007669"/>
    <property type="project" value="UniProtKB-SubCell"/>
</dbReference>
<dbReference type="GO" id="GO:0005525">
    <property type="term" value="F:GTP binding"/>
    <property type="evidence" value="ECO:0007669"/>
    <property type="project" value="UniProtKB-KW"/>
</dbReference>
<dbReference type="GO" id="GO:0003924">
    <property type="term" value="F:GTPase activity"/>
    <property type="evidence" value="ECO:0007669"/>
    <property type="project" value="InterPro"/>
</dbReference>
<dbReference type="GO" id="GO:0043022">
    <property type="term" value="F:ribosome binding"/>
    <property type="evidence" value="ECO:0007669"/>
    <property type="project" value="TreeGrafter"/>
</dbReference>
<dbReference type="GO" id="GO:0045727">
    <property type="term" value="P:positive regulation of translation"/>
    <property type="evidence" value="ECO:0007669"/>
    <property type="project" value="TreeGrafter"/>
</dbReference>
<dbReference type="GO" id="GO:0006412">
    <property type="term" value="P:translation"/>
    <property type="evidence" value="ECO:0007669"/>
    <property type="project" value="UniProtKB-KW"/>
</dbReference>
<dbReference type="CDD" id="cd03699">
    <property type="entry name" value="EF4_II"/>
    <property type="match status" value="1"/>
</dbReference>
<dbReference type="CDD" id="cd16260">
    <property type="entry name" value="EF4_III"/>
    <property type="match status" value="1"/>
</dbReference>
<dbReference type="CDD" id="cd01890">
    <property type="entry name" value="LepA"/>
    <property type="match status" value="1"/>
</dbReference>
<dbReference type="CDD" id="cd03709">
    <property type="entry name" value="lepA_C"/>
    <property type="match status" value="1"/>
</dbReference>
<dbReference type="FunFam" id="3.40.50.300:FF:000078">
    <property type="entry name" value="Elongation factor 4"/>
    <property type="match status" value="1"/>
</dbReference>
<dbReference type="FunFam" id="2.40.30.10:FF:000015">
    <property type="entry name" value="Translation factor GUF1, mitochondrial"/>
    <property type="match status" value="1"/>
</dbReference>
<dbReference type="FunFam" id="3.30.70.240:FF:000007">
    <property type="entry name" value="Translation factor GUF1, mitochondrial"/>
    <property type="match status" value="1"/>
</dbReference>
<dbReference type="FunFam" id="3.30.70.2570:FF:000001">
    <property type="entry name" value="Translation factor GUF1, mitochondrial"/>
    <property type="match status" value="1"/>
</dbReference>
<dbReference type="FunFam" id="3.30.70.870:FF:000004">
    <property type="entry name" value="Translation factor GUF1, mitochondrial"/>
    <property type="match status" value="1"/>
</dbReference>
<dbReference type="Gene3D" id="3.30.70.240">
    <property type="match status" value="1"/>
</dbReference>
<dbReference type="Gene3D" id="3.30.70.2570">
    <property type="entry name" value="Elongation factor 4, C-terminal domain"/>
    <property type="match status" value="1"/>
</dbReference>
<dbReference type="Gene3D" id="3.30.70.870">
    <property type="entry name" value="Elongation Factor G (Translational Gtpase), domain 3"/>
    <property type="match status" value="1"/>
</dbReference>
<dbReference type="Gene3D" id="3.40.50.300">
    <property type="entry name" value="P-loop containing nucleotide triphosphate hydrolases"/>
    <property type="match status" value="1"/>
</dbReference>
<dbReference type="Gene3D" id="2.40.30.10">
    <property type="entry name" value="Translation factors"/>
    <property type="match status" value="1"/>
</dbReference>
<dbReference type="HAMAP" id="MF_03138">
    <property type="entry name" value="GUFP"/>
    <property type="match status" value="1"/>
</dbReference>
<dbReference type="HAMAP" id="MF_00071">
    <property type="entry name" value="LepA"/>
    <property type="match status" value="1"/>
</dbReference>
<dbReference type="InterPro" id="IPR006297">
    <property type="entry name" value="EF-4"/>
</dbReference>
<dbReference type="InterPro" id="IPR035647">
    <property type="entry name" value="EFG_III/V"/>
</dbReference>
<dbReference type="InterPro" id="IPR000640">
    <property type="entry name" value="EFG_V-like"/>
</dbReference>
<dbReference type="InterPro" id="IPR004161">
    <property type="entry name" value="EFTu-like_2"/>
</dbReference>
<dbReference type="InterPro" id="IPR031157">
    <property type="entry name" value="G_TR_CS"/>
</dbReference>
<dbReference type="InterPro" id="IPR027518">
    <property type="entry name" value="GUFP"/>
</dbReference>
<dbReference type="InterPro" id="IPR038363">
    <property type="entry name" value="LepA_C_sf"/>
</dbReference>
<dbReference type="InterPro" id="IPR013842">
    <property type="entry name" value="LepA_CTD"/>
</dbReference>
<dbReference type="InterPro" id="IPR035654">
    <property type="entry name" value="LepA_IV"/>
</dbReference>
<dbReference type="InterPro" id="IPR027417">
    <property type="entry name" value="P-loop_NTPase"/>
</dbReference>
<dbReference type="InterPro" id="IPR005225">
    <property type="entry name" value="Small_GTP-bd"/>
</dbReference>
<dbReference type="InterPro" id="IPR000795">
    <property type="entry name" value="T_Tr_GTP-bd_dom"/>
</dbReference>
<dbReference type="NCBIfam" id="TIGR01393">
    <property type="entry name" value="lepA"/>
    <property type="match status" value="1"/>
</dbReference>
<dbReference type="NCBIfam" id="TIGR00231">
    <property type="entry name" value="small_GTP"/>
    <property type="match status" value="1"/>
</dbReference>
<dbReference type="PANTHER" id="PTHR43512:SF4">
    <property type="entry name" value="TRANSLATION FACTOR GUF1 HOMOLOG, CHLOROPLASTIC"/>
    <property type="match status" value="1"/>
</dbReference>
<dbReference type="PANTHER" id="PTHR43512">
    <property type="entry name" value="TRANSLATION FACTOR GUF1-RELATED"/>
    <property type="match status" value="1"/>
</dbReference>
<dbReference type="Pfam" id="PF00679">
    <property type="entry name" value="EFG_C"/>
    <property type="match status" value="1"/>
</dbReference>
<dbReference type="Pfam" id="PF00009">
    <property type="entry name" value="GTP_EFTU"/>
    <property type="match status" value="1"/>
</dbReference>
<dbReference type="Pfam" id="PF03144">
    <property type="entry name" value="GTP_EFTU_D2"/>
    <property type="match status" value="1"/>
</dbReference>
<dbReference type="Pfam" id="PF06421">
    <property type="entry name" value="LepA_C"/>
    <property type="match status" value="1"/>
</dbReference>
<dbReference type="PRINTS" id="PR00315">
    <property type="entry name" value="ELONGATNFCT"/>
</dbReference>
<dbReference type="SMART" id="SM00838">
    <property type="entry name" value="EFG_C"/>
    <property type="match status" value="1"/>
</dbReference>
<dbReference type="SUPFAM" id="SSF54980">
    <property type="entry name" value="EF-G C-terminal domain-like"/>
    <property type="match status" value="2"/>
</dbReference>
<dbReference type="SUPFAM" id="SSF52540">
    <property type="entry name" value="P-loop containing nucleoside triphosphate hydrolases"/>
    <property type="match status" value="1"/>
</dbReference>
<dbReference type="PROSITE" id="PS00301">
    <property type="entry name" value="G_TR_1"/>
    <property type="match status" value="1"/>
</dbReference>
<dbReference type="PROSITE" id="PS51722">
    <property type="entry name" value="G_TR_2"/>
    <property type="match status" value="1"/>
</dbReference>